<reference key="1">
    <citation type="journal article" date="2002" name="Curr. Biol.">
        <title>A comprehensive collection of chicken cDNAs.</title>
        <authorList>
            <person name="Boardman P.E."/>
            <person name="Sanz-Ezquerro J."/>
            <person name="Overton I.M."/>
            <person name="Burt D.W."/>
            <person name="Bosch E."/>
            <person name="Fong W.T."/>
            <person name="Tickle C."/>
            <person name="Brown W.R."/>
            <person name="Wilson S.A."/>
            <person name="Hubbard S.J."/>
        </authorList>
    </citation>
    <scope>NUCLEOTIDE SEQUENCE [LARGE SCALE MRNA]</scope>
    <source>
        <strain>White Leghorn Hisex</strain>
    </source>
</reference>
<reference key="2">
    <citation type="journal article" date="2004" name="Nature">
        <title>Sequence and comparative analysis of the chicken genome provide unique perspectives on vertebrate evolution.</title>
        <authorList>
            <person name="Hillier L.W."/>
            <person name="Miller W."/>
            <person name="Birney E."/>
            <person name="Warren W."/>
            <person name="Hardison R.C."/>
            <person name="Ponting C.P."/>
            <person name="Bork P."/>
            <person name="Burt D.W."/>
            <person name="Groenen M.A.M."/>
            <person name="Delany M.E."/>
            <person name="Dodgson J.B."/>
            <person name="Chinwalla A.T."/>
            <person name="Cliften P.F."/>
            <person name="Clifton S.W."/>
            <person name="Delehaunty K.D."/>
            <person name="Fronick C."/>
            <person name="Fulton R.S."/>
            <person name="Graves T.A."/>
            <person name="Kremitzki C."/>
            <person name="Layman D."/>
            <person name="Magrini V."/>
            <person name="McPherson J.D."/>
            <person name="Miner T.L."/>
            <person name="Minx P."/>
            <person name="Nash W.E."/>
            <person name="Nhan M.N."/>
            <person name="Nelson J.O."/>
            <person name="Oddy L.G."/>
            <person name="Pohl C.S."/>
            <person name="Randall-Maher J."/>
            <person name="Smith S.M."/>
            <person name="Wallis J.W."/>
            <person name="Yang S.-P."/>
            <person name="Romanov M.N."/>
            <person name="Rondelli C.M."/>
            <person name="Paton B."/>
            <person name="Smith J."/>
            <person name="Morrice D."/>
            <person name="Daniels L."/>
            <person name="Tempest H.G."/>
            <person name="Robertson L."/>
            <person name="Masabanda J.S."/>
            <person name="Griffin D.K."/>
            <person name="Vignal A."/>
            <person name="Fillon V."/>
            <person name="Jacobbson L."/>
            <person name="Kerje S."/>
            <person name="Andersson L."/>
            <person name="Crooijmans R.P."/>
            <person name="Aerts J."/>
            <person name="van der Poel J.J."/>
            <person name="Ellegren H."/>
            <person name="Caldwell R.B."/>
            <person name="Hubbard S.J."/>
            <person name="Grafham D.V."/>
            <person name="Kierzek A.M."/>
            <person name="McLaren S.R."/>
            <person name="Overton I.M."/>
            <person name="Arakawa H."/>
            <person name="Beattie K.J."/>
            <person name="Bezzubov Y."/>
            <person name="Boardman P.E."/>
            <person name="Bonfield J.K."/>
            <person name="Croning M.D.R."/>
            <person name="Davies R.M."/>
            <person name="Francis M.D."/>
            <person name="Humphray S.J."/>
            <person name="Scott C.E."/>
            <person name="Taylor R.G."/>
            <person name="Tickle C."/>
            <person name="Brown W.R.A."/>
            <person name="Rogers J."/>
            <person name="Buerstedde J.-M."/>
            <person name="Wilson S.A."/>
            <person name="Stubbs L."/>
            <person name="Ovcharenko I."/>
            <person name="Gordon L."/>
            <person name="Lucas S."/>
            <person name="Miller M.M."/>
            <person name="Inoko H."/>
            <person name="Shiina T."/>
            <person name="Kaufman J."/>
            <person name="Salomonsen J."/>
            <person name="Skjoedt K."/>
            <person name="Wong G.K.-S."/>
            <person name="Wang J."/>
            <person name="Liu B."/>
            <person name="Wang J."/>
            <person name="Yu J."/>
            <person name="Yang H."/>
            <person name="Nefedov M."/>
            <person name="Koriabine M."/>
            <person name="Dejong P.J."/>
            <person name="Goodstadt L."/>
            <person name="Webber C."/>
            <person name="Dickens N.J."/>
            <person name="Letunic I."/>
            <person name="Suyama M."/>
            <person name="Torrents D."/>
            <person name="von Mering C."/>
            <person name="Zdobnov E.M."/>
            <person name="Makova K."/>
            <person name="Nekrutenko A."/>
            <person name="Elnitski L."/>
            <person name="Eswara P."/>
            <person name="King D.C."/>
            <person name="Yang S.-P."/>
            <person name="Tyekucheva S."/>
            <person name="Radakrishnan A."/>
            <person name="Harris R.S."/>
            <person name="Chiaromonte F."/>
            <person name="Taylor J."/>
            <person name="He J."/>
            <person name="Rijnkels M."/>
            <person name="Griffiths-Jones S."/>
            <person name="Ureta-Vidal A."/>
            <person name="Hoffman M.M."/>
            <person name="Severin J."/>
            <person name="Searle S.M.J."/>
            <person name="Law A.S."/>
            <person name="Speed D."/>
            <person name="Waddington D."/>
            <person name="Cheng Z."/>
            <person name="Tuzun E."/>
            <person name="Eichler E."/>
            <person name="Bao Z."/>
            <person name="Flicek P."/>
            <person name="Shteynberg D.D."/>
            <person name="Brent M.R."/>
            <person name="Bye J.M."/>
            <person name="Huckle E.J."/>
            <person name="Chatterji S."/>
            <person name="Dewey C."/>
            <person name="Pachter L."/>
            <person name="Kouranov A."/>
            <person name="Mourelatos Z."/>
            <person name="Hatzigeorgiou A.G."/>
            <person name="Paterson A.H."/>
            <person name="Ivarie R."/>
            <person name="Brandstrom M."/>
            <person name="Axelsson E."/>
            <person name="Backstrom N."/>
            <person name="Berlin S."/>
            <person name="Webster M.T."/>
            <person name="Pourquie O."/>
            <person name="Reymond A."/>
            <person name="Ucla C."/>
            <person name="Antonarakis S.E."/>
            <person name="Long M."/>
            <person name="Emerson J.J."/>
            <person name="Betran E."/>
            <person name="Dupanloup I."/>
            <person name="Kaessmann H."/>
            <person name="Hinrichs A.S."/>
            <person name="Bejerano G."/>
            <person name="Furey T.S."/>
            <person name="Harte R.A."/>
            <person name="Raney B."/>
            <person name="Siepel A."/>
            <person name="Kent W.J."/>
            <person name="Haussler D."/>
            <person name="Eyras E."/>
            <person name="Castelo R."/>
            <person name="Abril J.F."/>
            <person name="Castellano S."/>
            <person name="Camara F."/>
            <person name="Parra G."/>
            <person name="Guigo R."/>
            <person name="Bourque G."/>
            <person name="Tesler G."/>
            <person name="Pevzner P.A."/>
            <person name="Smit A."/>
            <person name="Fulton L.A."/>
            <person name="Mardis E.R."/>
            <person name="Wilson R.K."/>
        </authorList>
    </citation>
    <scope>NUCLEOTIDE SEQUENCE [LARGE SCALE GENOMIC DNA]</scope>
    <source>
        <strain>Red jungle fowl</strain>
    </source>
</reference>
<reference key="3">
    <citation type="journal article" date="2009" name="J. Cell Biol.">
        <title>The CENP-S complex is essential for the stable assembly of outer kinetochore structure.</title>
        <authorList>
            <person name="Amano M."/>
            <person name="Suzuki A."/>
            <person name="Hori T."/>
            <person name="Backer C."/>
            <person name="Okawa K."/>
            <person name="Cheeseman I.M."/>
            <person name="Fukagawa T."/>
        </authorList>
    </citation>
    <scope>FUNCTION</scope>
    <scope>INTERACTION WITH CENPX</scope>
    <scope>IDENTIFICATION BY MASS SPECTROMETRY</scope>
    <scope>SUBCELLULAR LOCATION</scope>
</reference>
<reference key="4">
    <citation type="journal article" date="2010" name="Mol. Cell">
        <title>A histone-fold complex and FANCM form a conserved DNA-remodeling complex to maintain genome stability.</title>
        <authorList>
            <person name="Yan Z."/>
            <person name="Delannoy M."/>
            <person name="Ling C."/>
            <person name="Daee D."/>
            <person name="Osman F."/>
            <person name="Muniandy P.A."/>
            <person name="Shen X."/>
            <person name="Oostra A.B."/>
            <person name="Du H."/>
            <person name="Steltenpool J."/>
            <person name="Lin T."/>
            <person name="Schuster B."/>
            <person name="Decaillet C."/>
            <person name="Stasiak A."/>
            <person name="Stasiak A.Z."/>
            <person name="Stone S."/>
            <person name="Hoatlin M.E."/>
            <person name="Schindler D."/>
            <person name="Woodcock C.L."/>
            <person name="Joenje H."/>
            <person name="Sen R."/>
            <person name="de Winter J.P."/>
            <person name="Li L."/>
            <person name="Seidman M.M."/>
            <person name="Whitby M.C."/>
            <person name="Myung K."/>
            <person name="Constantinousend A."/>
            <person name="Wang W."/>
        </authorList>
    </citation>
    <scope>FUNCTION</scope>
</reference>
<reference key="5">
    <citation type="journal article" date="2012" name="Cell">
        <title>CENP-T-W-S-X forms a unique centromeric chromatin structure with a histone-like fold.</title>
        <authorList>
            <person name="Nishino T."/>
            <person name="Takeuchi K."/>
            <person name="Gascoigne K.E."/>
            <person name="Suzuki A."/>
            <person name="Hori T."/>
            <person name="Oyama T."/>
            <person name="Morikawa K."/>
            <person name="Cheeseman I.M."/>
            <person name="Fukagawa T."/>
        </authorList>
    </citation>
    <scope>X-RAY CRYSTALLOGRAPHY (2.15 ANGSTROMS)</scope>
    <scope>FUNCTION</scope>
    <scope>INTERACTION WITH CENPT; CENPW AND CEPNX</scope>
    <scope>SUBCELLULAR LOCATION</scope>
    <scope>MUTAGENESIS OF ARG-15; LYS-41 AND LYS-70</scope>
</reference>
<dbReference type="EMBL" id="BX930742">
    <property type="status" value="NOT_ANNOTATED_CDS"/>
    <property type="molecule type" value="mRNA"/>
</dbReference>
<dbReference type="EMBL" id="AADN02040781">
    <property type="status" value="NOT_ANNOTATED_CDS"/>
    <property type="molecule type" value="Genomic_DNA"/>
</dbReference>
<dbReference type="RefSeq" id="NP_001191861.1">
    <property type="nucleotide sequence ID" value="NM_001204932.2"/>
</dbReference>
<dbReference type="PDB" id="3B0B">
    <property type="method" value="X-ray"/>
    <property type="resolution" value="2.15 A"/>
    <property type="chains" value="A/B=2-106"/>
</dbReference>
<dbReference type="PDB" id="3VH5">
    <property type="method" value="X-ray"/>
    <property type="resolution" value="2.40 A"/>
    <property type="chains" value="A=2-139"/>
</dbReference>
<dbReference type="PDB" id="3VH6">
    <property type="method" value="X-ray"/>
    <property type="resolution" value="3.35 A"/>
    <property type="chains" value="A=2-139"/>
</dbReference>
<dbReference type="PDB" id="7DA0">
    <property type="method" value="X-ray"/>
    <property type="resolution" value="1.25 A"/>
    <property type="chains" value="B=2-106"/>
</dbReference>
<dbReference type="PDB" id="7DA1">
    <property type="method" value="X-ray"/>
    <property type="resolution" value="2.01 A"/>
    <property type="chains" value="A/B=2-106"/>
</dbReference>
<dbReference type="PDB" id="7DA2">
    <property type="method" value="X-ray"/>
    <property type="resolution" value="2.79 A"/>
    <property type="chains" value="A/C=2-106"/>
</dbReference>
<dbReference type="PDBsum" id="3B0B"/>
<dbReference type="PDBsum" id="3VH5"/>
<dbReference type="PDBsum" id="3VH6"/>
<dbReference type="PDBsum" id="7DA0"/>
<dbReference type="PDBsum" id="7DA1"/>
<dbReference type="PDBsum" id="7DA2"/>
<dbReference type="SMR" id="E1BSW7"/>
<dbReference type="BioGRID" id="692121">
    <property type="interactions" value="2"/>
</dbReference>
<dbReference type="FunCoup" id="E1BSW7">
    <property type="interactions" value="202"/>
</dbReference>
<dbReference type="IntAct" id="E1BSW7">
    <property type="interactions" value="3"/>
</dbReference>
<dbReference type="STRING" id="9031.ENSGALP00000040599"/>
<dbReference type="PaxDb" id="9031-ENSGALP00000040599"/>
<dbReference type="GeneID" id="771417"/>
<dbReference type="KEGG" id="gga:771417"/>
<dbReference type="CTD" id="378708"/>
<dbReference type="VEuPathDB" id="HostDB:geneid_771417"/>
<dbReference type="eggNOG" id="ENOG502S62X">
    <property type="taxonomic scope" value="Eukaryota"/>
</dbReference>
<dbReference type="HOGENOM" id="CLU_100369_0_0_1"/>
<dbReference type="InParanoid" id="E1BSW7"/>
<dbReference type="OMA" id="WTQIENV"/>
<dbReference type="OrthoDB" id="1872155at2759"/>
<dbReference type="Reactome" id="R-GGA-141444">
    <property type="pathway name" value="Amplification of signal from unattached kinetochores via a MAD2 inhibitory signal"/>
</dbReference>
<dbReference type="Reactome" id="R-GGA-2467813">
    <property type="pathway name" value="Separation of Sister Chromatids"/>
</dbReference>
<dbReference type="Reactome" id="R-GGA-2500257">
    <property type="pathway name" value="Resolution of Sister Chromatid Cohesion"/>
</dbReference>
<dbReference type="Reactome" id="R-GGA-5663220">
    <property type="pathway name" value="RHO GTPases Activate Formins"/>
</dbReference>
<dbReference type="Reactome" id="R-GGA-606279">
    <property type="pathway name" value="Deposition of new CENPA-containing nucleosomes at the centromere"/>
</dbReference>
<dbReference type="Reactome" id="R-GGA-6783310">
    <property type="pathway name" value="Fanconi Anemia Pathway"/>
</dbReference>
<dbReference type="Reactome" id="R-GGA-9648025">
    <property type="pathway name" value="EML4 and NUDC in mitotic spindle formation"/>
</dbReference>
<dbReference type="Reactome" id="R-GGA-9833482">
    <property type="pathway name" value="PKR-mediated signaling"/>
</dbReference>
<dbReference type="EvolutionaryTrace" id="E1BSW7"/>
<dbReference type="PRO" id="PR:E1BSW7"/>
<dbReference type="Proteomes" id="UP000000539">
    <property type="component" value="Chromosome 21"/>
</dbReference>
<dbReference type="Bgee" id="ENSGALG00000024481">
    <property type="expression patterns" value="Expressed in spermatid and 13 other cell types or tissues"/>
</dbReference>
<dbReference type="GO" id="GO:0071821">
    <property type="term" value="C:FANCM-MHF complex"/>
    <property type="evidence" value="ECO:0000318"/>
    <property type="project" value="GO_Central"/>
</dbReference>
<dbReference type="GO" id="GO:0000776">
    <property type="term" value="C:kinetochore"/>
    <property type="evidence" value="ECO:0007669"/>
    <property type="project" value="UniProtKB-KW"/>
</dbReference>
<dbReference type="GO" id="GO:0003682">
    <property type="term" value="F:chromatin binding"/>
    <property type="evidence" value="ECO:0000318"/>
    <property type="project" value="GO_Central"/>
</dbReference>
<dbReference type="GO" id="GO:0003677">
    <property type="term" value="F:DNA binding"/>
    <property type="evidence" value="ECO:0007669"/>
    <property type="project" value="UniProtKB-KW"/>
</dbReference>
<dbReference type="GO" id="GO:0046982">
    <property type="term" value="F:protein heterodimerization activity"/>
    <property type="evidence" value="ECO:0007669"/>
    <property type="project" value="InterPro"/>
</dbReference>
<dbReference type="GO" id="GO:0051301">
    <property type="term" value="P:cell division"/>
    <property type="evidence" value="ECO:0007669"/>
    <property type="project" value="UniProtKB-KW"/>
</dbReference>
<dbReference type="GO" id="GO:0006281">
    <property type="term" value="P:DNA repair"/>
    <property type="evidence" value="ECO:0007669"/>
    <property type="project" value="UniProtKB-KW"/>
</dbReference>
<dbReference type="GO" id="GO:0031297">
    <property type="term" value="P:replication fork processing"/>
    <property type="evidence" value="ECO:0000318"/>
    <property type="project" value="GO_Central"/>
</dbReference>
<dbReference type="GO" id="GO:0000712">
    <property type="term" value="P:resolution of meiotic recombination intermediates"/>
    <property type="evidence" value="ECO:0000318"/>
    <property type="project" value="GO_Central"/>
</dbReference>
<dbReference type="CDD" id="cd22919">
    <property type="entry name" value="HFD_CENP-S"/>
    <property type="match status" value="1"/>
</dbReference>
<dbReference type="DisProt" id="DP02079"/>
<dbReference type="FunFam" id="1.10.20.10:FF:000063">
    <property type="entry name" value="Centromere protein S"/>
    <property type="match status" value="1"/>
</dbReference>
<dbReference type="Gene3D" id="1.10.20.10">
    <property type="entry name" value="Histone, subunit A"/>
    <property type="match status" value="1"/>
</dbReference>
<dbReference type="InterPro" id="IPR029003">
    <property type="entry name" value="CENP-S/Mhf1"/>
</dbReference>
<dbReference type="InterPro" id="IPR009072">
    <property type="entry name" value="Histone-fold"/>
</dbReference>
<dbReference type="PANTHER" id="PTHR22980:SF0">
    <property type="entry name" value="CENTROMERE PROTEIN S"/>
    <property type="match status" value="1"/>
</dbReference>
<dbReference type="PANTHER" id="PTHR22980">
    <property type="entry name" value="CORTISTATIN"/>
    <property type="match status" value="1"/>
</dbReference>
<dbReference type="Pfam" id="PF15630">
    <property type="entry name" value="CENP-S"/>
    <property type="match status" value="1"/>
</dbReference>
<dbReference type="SUPFAM" id="SSF47113">
    <property type="entry name" value="Histone-fold"/>
    <property type="match status" value="1"/>
</dbReference>
<accession>E1BSW7</accession>
<feature type="chain" id="PRO_0000417386" description="Centromere protein S">
    <location>
        <begin position="1"/>
        <end position="139"/>
    </location>
</feature>
<feature type="region of interest" description="Disordered" evidence="2">
    <location>
        <begin position="99"/>
        <end position="139"/>
    </location>
</feature>
<feature type="compositionally biased region" description="Basic residues" evidence="2">
    <location>
        <begin position="110"/>
        <end position="120"/>
    </location>
</feature>
<feature type="mutagenesis site" description="Abolishes sequence-specific DNA binding; when associated with A-41 and A-70." evidence="5">
    <original>R</original>
    <variation>A</variation>
    <location>
        <position position="15"/>
    </location>
</feature>
<feature type="mutagenesis site" description="Abolishes sequence-specific DNA binding; when associated with A-15 and A-70." evidence="5">
    <original>K</original>
    <variation>A</variation>
    <location>
        <position position="41"/>
    </location>
</feature>
<feature type="mutagenesis site" description="Abolishes sequence-specific DNA binding; when associated with A-15 and A-41." evidence="5">
    <original>K</original>
    <variation>A</variation>
    <location>
        <position position="70"/>
    </location>
</feature>
<feature type="helix" evidence="7">
    <location>
        <begin position="8"/>
        <end position="35"/>
    </location>
</feature>
<feature type="helix" evidence="7">
    <location>
        <begin position="41"/>
        <end position="68"/>
    </location>
</feature>
<feature type="strand" evidence="7">
    <location>
        <begin position="72"/>
        <end position="74"/>
    </location>
</feature>
<feature type="helix" evidence="7">
    <location>
        <begin position="76"/>
        <end position="82"/>
    </location>
</feature>
<feature type="turn" evidence="7">
    <location>
        <begin position="83"/>
        <end position="85"/>
    </location>
</feature>
<feature type="helix" evidence="7">
    <location>
        <begin position="87"/>
        <end position="99"/>
    </location>
</feature>
<keyword id="KW-0002">3D-structure</keyword>
<keyword id="KW-0131">Cell cycle</keyword>
<keyword id="KW-0132">Cell division</keyword>
<keyword id="KW-0137">Centromere</keyword>
<keyword id="KW-0158">Chromosome</keyword>
<keyword id="KW-0227">DNA damage</keyword>
<keyword id="KW-0234">DNA repair</keyword>
<keyword id="KW-0238">DNA-binding</keyword>
<keyword id="KW-0995">Kinetochore</keyword>
<keyword id="KW-0498">Mitosis</keyword>
<keyword id="KW-0539">Nucleus</keyword>
<keyword id="KW-1185">Reference proteome</keyword>
<sequence>MEAAGGEQRELLIQRLRAAVHYTTGCLCQDVAEDKGVLFSKQTVAAISEITFRQCENFARDLEMFARHAKRSTITSEDVKLLARRSNSLLKYITQKSDELASSNMEQKEKKKKKSSAAKGRKTEENETPVTESEDSNMA</sequence>
<proteinExistence type="evidence at protein level"/>
<organism>
    <name type="scientific">Gallus gallus</name>
    <name type="common">Chicken</name>
    <dbReference type="NCBI Taxonomy" id="9031"/>
    <lineage>
        <taxon>Eukaryota</taxon>
        <taxon>Metazoa</taxon>
        <taxon>Chordata</taxon>
        <taxon>Craniata</taxon>
        <taxon>Vertebrata</taxon>
        <taxon>Euteleostomi</taxon>
        <taxon>Archelosauria</taxon>
        <taxon>Archosauria</taxon>
        <taxon>Dinosauria</taxon>
        <taxon>Saurischia</taxon>
        <taxon>Theropoda</taxon>
        <taxon>Coelurosauria</taxon>
        <taxon>Aves</taxon>
        <taxon>Neognathae</taxon>
        <taxon>Galloanserae</taxon>
        <taxon>Galliformes</taxon>
        <taxon>Phasianidae</taxon>
        <taxon>Phasianinae</taxon>
        <taxon>Gallus</taxon>
    </lineage>
</organism>
<comment type="function">
    <text evidence="1 3 4">DNA-binding component of the Fanconi anemia (FA) core complex. Required for the normal activation of the FA pathway, leading to monoubiquitination of the FANCI-FANCD2 complex in response to DNA damage, cellular resistance to DNA cross-linking drugs, and prevention of chromosomal breakage (PubMed:20347428). In complex with CENPX (MHF heterodimer), crucial cofactor for FANCM in both binding and ATP-dependent remodeling of DNA. Stabilizes FANCM. In complex with CENPX and FANCM (but not other FANC proteins), rapidly recruited to blocked forks and promotes gene conversion at blocked replication forks. In complex with CENPT, CENPW and CENPX (CENP-T-W-S-X heterotetramer), involved in the formation of a functional kinetochore outer plate, which is essential for kinetochore-microtubule attachment and faithful mitotic progression (PubMed:19620631). As a component of MHF and CENP-T-W-S-X complexes, binds DNA and bends it to form a nucleosome-like structure. DNA-binding function is fulfilled in the presence of CENPX, with the following preference for DNA substates: Holliday junction &gt; double-stranded &gt; splay arm &gt; single-stranded. Does not bind DNA on its own (By similarity).</text>
</comment>
<comment type="subunit">
    <text evidence="1 5">Heterodimer with CENPX, sometimes called MHF; this interaction stabilizes both partners. MHF heterodimers can assemble to form tetrameric structures (PubMed:22304917). MHF also coassemble with CENPT-CENPW heterodimers at centromeres to form the tetrameric CENP-T-W-S-X complex (PubMed:22304917). Forms a discrete complex with FANCM and CENPX, called FANCM-MHF; this interaction, probably mediated by direct binding between CENPS and FANCM, leads to synergistic activation of double-stranded DNA binding and strongly stimulates FANCM-mediated DNA remodeling. Recruited by FANCM to the Fanconi anemia (FA) core complex, which consists of CENPS, CENPX, FANCA, FANCB, FANCC, FANCE, FANCF, FANCG, FANCL, FANCM, FAAP24 and FAAP100. The FA core complex associates with Bloom syndrome (BLM) complex, which consists of at least BLM, DNA topoisomerase 3-alpha (TOP3A), RMI1/BLAP75, RPA1/RPA70 and RPA2/RPA32. The super complex between FA and BLM is called BRAFT. Component of the CENPA-CAD complex, composed of CENPI, CENPK, CENPL, CENPO, CENPP, CENPQ, CENPR and CENPS. The CENPA-CAD complex is probably recruited on centromeres by the CENPA-NAC complex, at least composed of CENPA, CENPC, CENPH, CENPM, CENPN, CENPT and CENPU (By similarity).</text>
</comment>
<comment type="interaction">
    <interactant intactId="EBI-5487792">
        <id>E1BSW7</id>
    </interactant>
    <interactant intactId="EBI-2132248">
        <id>F1NPG5</id>
        <label>CENPT</label>
    </interactant>
    <organismsDiffer>false</organismsDiffer>
    <experiments>3</experiments>
</comment>
<comment type="interaction">
    <interactant intactId="EBI-5487792">
        <id>E1BSW7</id>
    </interactant>
    <interactant intactId="EBI-5590609">
        <id>P0DJH7</id>
        <label>CENPX</label>
    </interactant>
    <organismsDiffer>false</organismsDiffer>
    <experiments>4</experiments>
</comment>
<comment type="subcellular location">
    <subcellularLocation>
        <location evidence="3">Nucleus</location>
    </subcellularLocation>
    <subcellularLocation>
        <location evidence="3">Chromosome</location>
        <location evidence="3">Centromere</location>
    </subcellularLocation>
    <subcellularLocation>
        <location evidence="3">Chromosome</location>
        <location evidence="3">Centromere</location>
        <location evidence="3">Kinetochore</location>
    </subcellularLocation>
    <text evidence="1">Assembly of CENPS and CENPX and its partner subunits CENPT and CENPW at centromeres occurs through a dynamic exchange mechanism. Although exchange is continuous in the cell cycle, de novo assembly starts principally during mid-late S phase and is complete by G2. CENPS is more stably bound at the kinetochore than CENPX. During S phase, rapidly recruited to DNA interstrand cross-links that block replication. Recruited to DNA damage sites about 20 minutes following UV irradiation, reaching a plateau after approximately 40 minutes.</text>
</comment>
<comment type="similarity">
    <text evidence="6">Belongs to the TAF9 family. CENP-S/MHF1 subfamily.</text>
</comment>
<name>CENPS_CHICK</name>
<evidence type="ECO:0000250" key="1">
    <source>
        <dbReference type="UniProtKB" id="Q8N2Z9"/>
    </source>
</evidence>
<evidence type="ECO:0000256" key="2">
    <source>
        <dbReference type="SAM" id="MobiDB-lite"/>
    </source>
</evidence>
<evidence type="ECO:0000269" key="3">
    <source>
    </source>
</evidence>
<evidence type="ECO:0000269" key="4">
    <source>
    </source>
</evidence>
<evidence type="ECO:0000269" key="5">
    <source>
    </source>
</evidence>
<evidence type="ECO:0000305" key="6"/>
<evidence type="ECO:0007829" key="7">
    <source>
        <dbReference type="PDB" id="7DA0"/>
    </source>
</evidence>
<protein>
    <recommendedName>
        <fullName>Centromere protein S</fullName>
        <shortName>CENP-S</shortName>
    </recommendedName>
</protein>
<gene>
    <name type="primary">CENPS</name>
    <name type="synonym">APITD1</name>
</gene>